<comment type="function">
    <text evidence="1">Necessary for normal cell division and for the maintenance of normal septation.</text>
</comment>
<comment type="cofactor">
    <cofactor evidence="1">
        <name>Mg(2+)</name>
        <dbReference type="ChEBI" id="CHEBI:18420"/>
    </cofactor>
</comment>
<comment type="similarity">
    <text evidence="1">Belongs to the TRAFAC class TrmE-Era-EngA-EngB-Septin-like GTPase superfamily. EngB GTPase family.</text>
</comment>
<name>ENGB_STAS1</name>
<protein>
    <recommendedName>
        <fullName evidence="1">Probable GTP-binding protein EngB</fullName>
    </recommendedName>
</protein>
<feature type="chain" id="PRO_0000266959" description="Probable GTP-binding protein EngB">
    <location>
        <begin position="1"/>
        <end position="195"/>
    </location>
</feature>
<feature type="domain" description="EngB-type G" evidence="1">
    <location>
        <begin position="24"/>
        <end position="195"/>
    </location>
</feature>
<feature type="binding site" evidence="1">
    <location>
        <begin position="32"/>
        <end position="39"/>
    </location>
    <ligand>
        <name>GTP</name>
        <dbReference type="ChEBI" id="CHEBI:37565"/>
    </ligand>
</feature>
<feature type="binding site" evidence="1">
    <location>
        <position position="39"/>
    </location>
    <ligand>
        <name>Mg(2+)</name>
        <dbReference type="ChEBI" id="CHEBI:18420"/>
    </ligand>
</feature>
<feature type="binding site" evidence="1">
    <location>
        <begin position="59"/>
        <end position="63"/>
    </location>
    <ligand>
        <name>GTP</name>
        <dbReference type="ChEBI" id="CHEBI:37565"/>
    </ligand>
</feature>
<feature type="binding site" evidence="1">
    <location>
        <position position="61"/>
    </location>
    <ligand>
        <name>Mg(2+)</name>
        <dbReference type="ChEBI" id="CHEBI:18420"/>
    </ligand>
</feature>
<feature type="binding site" evidence="1">
    <location>
        <begin position="77"/>
        <end position="80"/>
    </location>
    <ligand>
        <name>GTP</name>
        <dbReference type="ChEBI" id="CHEBI:37565"/>
    </ligand>
</feature>
<feature type="binding site" evidence="1">
    <location>
        <begin position="144"/>
        <end position="147"/>
    </location>
    <ligand>
        <name>GTP</name>
        <dbReference type="ChEBI" id="CHEBI:37565"/>
    </ligand>
</feature>
<feature type="binding site" evidence="1">
    <location>
        <begin position="176"/>
        <end position="178"/>
    </location>
    <ligand>
        <name>GTP</name>
        <dbReference type="ChEBI" id="CHEBI:37565"/>
    </ligand>
</feature>
<sequence length="195" mass="22511">MKVNPNEIELLISAVKPEQYPETGLSEVGLSGRSNVGKSTFINSMIGRKNMARTSQQPGKTQTLNFYNIDNQLVFVDVPGYGYAKVSKKQREAFGKMIEKYISQREELKLVIQLVDLRHNPTEDDILMYNYLKYYEIPTFVVATKEDKIAKGKVQKHLANIQQKLEMEPEDEIISYSSVKNNKQQQIWNVIEKYL</sequence>
<proteinExistence type="inferred from homology"/>
<gene>
    <name evidence="1" type="primary">engB</name>
    <name type="ordered locus">SSP1091</name>
</gene>
<reference key="1">
    <citation type="journal article" date="2005" name="Proc. Natl. Acad. Sci. U.S.A.">
        <title>Whole genome sequence of Staphylococcus saprophyticus reveals the pathogenesis of uncomplicated urinary tract infection.</title>
        <authorList>
            <person name="Kuroda M."/>
            <person name="Yamashita A."/>
            <person name="Hirakawa H."/>
            <person name="Kumano M."/>
            <person name="Morikawa K."/>
            <person name="Higashide M."/>
            <person name="Maruyama A."/>
            <person name="Inose Y."/>
            <person name="Matoba K."/>
            <person name="Toh H."/>
            <person name="Kuhara S."/>
            <person name="Hattori M."/>
            <person name="Ohta T."/>
        </authorList>
    </citation>
    <scope>NUCLEOTIDE SEQUENCE [LARGE SCALE GENOMIC DNA]</scope>
    <source>
        <strain>ATCC 15305 / DSM 20229 / NCIMB 8711 / NCTC 7292 / S-41</strain>
    </source>
</reference>
<accession>Q49YA5</accession>
<dbReference type="EMBL" id="AP008934">
    <property type="protein sequence ID" value="BAE18236.1"/>
    <property type="molecule type" value="Genomic_DNA"/>
</dbReference>
<dbReference type="SMR" id="Q49YA5"/>
<dbReference type="GeneID" id="23780364"/>
<dbReference type="KEGG" id="ssp:SSP1091"/>
<dbReference type="PATRIC" id="fig|342451.11.peg.1090"/>
<dbReference type="eggNOG" id="COG0218">
    <property type="taxonomic scope" value="Bacteria"/>
</dbReference>
<dbReference type="HOGENOM" id="CLU_033732_3_0_9"/>
<dbReference type="OrthoDB" id="9804921at2"/>
<dbReference type="Proteomes" id="UP000006371">
    <property type="component" value="Chromosome"/>
</dbReference>
<dbReference type="GO" id="GO:0005829">
    <property type="term" value="C:cytosol"/>
    <property type="evidence" value="ECO:0007669"/>
    <property type="project" value="TreeGrafter"/>
</dbReference>
<dbReference type="GO" id="GO:0005525">
    <property type="term" value="F:GTP binding"/>
    <property type="evidence" value="ECO:0007669"/>
    <property type="project" value="UniProtKB-UniRule"/>
</dbReference>
<dbReference type="GO" id="GO:0046872">
    <property type="term" value="F:metal ion binding"/>
    <property type="evidence" value="ECO:0007669"/>
    <property type="project" value="UniProtKB-KW"/>
</dbReference>
<dbReference type="GO" id="GO:0000917">
    <property type="term" value="P:division septum assembly"/>
    <property type="evidence" value="ECO:0007669"/>
    <property type="project" value="UniProtKB-KW"/>
</dbReference>
<dbReference type="CDD" id="cd01876">
    <property type="entry name" value="YihA_EngB"/>
    <property type="match status" value="1"/>
</dbReference>
<dbReference type="FunFam" id="3.40.50.300:FF:000098">
    <property type="entry name" value="Probable GTP-binding protein EngB"/>
    <property type="match status" value="1"/>
</dbReference>
<dbReference type="Gene3D" id="3.40.50.300">
    <property type="entry name" value="P-loop containing nucleotide triphosphate hydrolases"/>
    <property type="match status" value="1"/>
</dbReference>
<dbReference type="HAMAP" id="MF_00321">
    <property type="entry name" value="GTPase_EngB"/>
    <property type="match status" value="1"/>
</dbReference>
<dbReference type="InterPro" id="IPR030393">
    <property type="entry name" value="G_ENGB_dom"/>
</dbReference>
<dbReference type="InterPro" id="IPR006073">
    <property type="entry name" value="GTP-bd"/>
</dbReference>
<dbReference type="InterPro" id="IPR019987">
    <property type="entry name" value="GTP-bd_ribosome_bio_YsxC"/>
</dbReference>
<dbReference type="InterPro" id="IPR027417">
    <property type="entry name" value="P-loop_NTPase"/>
</dbReference>
<dbReference type="InterPro" id="IPR005225">
    <property type="entry name" value="Small_GTP-bd"/>
</dbReference>
<dbReference type="NCBIfam" id="TIGR03598">
    <property type="entry name" value="GTPase_YsxC"/>
    <property type="match status" value="1"/>
</dbReference>
<dbReference type="NCBIfam" id="TIGR00231">
    <property type="entry name" value="small_GTP"/>
    <property type="match status" value="1"/>
</dbReference>
<dbReference type="PANTHER" id="PTHR11649:SF13">
    <property type="entry name" value="ENGB-TYPE G DOMAIN-CONTAINING PROTEIN"/>
    <property type="match status" value="1"/>
</dbReference>
<dbReference type="PANTHER" id="PTHR11649">
    <property type="entry name" value="MSS1/TRME-RELATED GTP-BINDING PROTEIN"/>
    <property type="match status" value="1"/>
</dbReference>
<dbReference type="Pfam" id="PF01926">
    <property type="entry name" value="MMR_HSR1"/>
    <property type="match status" value="1"/>
</dbReference>
<dbReference type="SUPFAM" id="SSF52540">
    <property type="entry name" value="P-loop containing nucleoside triphosphate hydrolases"/>
    <property type="match status" value="1"/>
</dbReference>
<dbReference type="PROSITE" id="PS51706">
    <property type="entry name" value="G_ENGB"/>
    <property type="match status" value="1"/>
</dbReference>
<keyword id="KW-0131">Cell cycle</keyword>
<keyword id="KW-0132">Cell division</keyword>
<keyword id="KW-0342">GTP-binding</keyword>
<keyword id="KW-0460">Magnesium</keyword>
<keyword id="KW-0479">Metal-binding</keyword>
<keyword id="KW-0547">Nucleotide-binding</keyword>
<keyword id="KW-1185">Reference proteome</keyword>
<keyword id="KW-0717">Septation</keyword>
<organism>
    <name type="scientific">Staphylococcus saprophyticus subsp. saprophyticus (strain ATCC 15305 / DSM 20229 / NCIMB 8711 / NCTC 7292 / S-41)</name>
    <dbReference type="NCBI Taxonomy" id="342451"/>
    <lineage>
        <taxon>Bacteria</taxon>
        <taxon>Bacillati</taxon>
        <taxon>Bacillota</taxon>
        <taxon>Bacilli</taxon>
        <taxon>Bacillales</taxon>
        <taxon>Staphylococcaceae</taxon>
        <taxon>Staphylococcus</taxon>
    </lineage>
</organism>
<evidence type="ECO:0000255" key="1">
    <source>
        <dbReference type="HAMAP-Rule" id="MF_00321"/>
    </source>
</evidence>